<feature type="chain" id="PRO_0000114059" description="Glutamyl-tRNA reductase">
    <location>
        <begin position="1"/>
        <end position="425"/>
    </location>
</feature>
<feature type="active site" description="Nucleophile" evidence="1">
    <location>
        <position position="50"/>
    </location>
</feature>
<feature type="binding site" evidence="1">
    <location>
        <begin position="49"/>
        <end position="52"/>
    </location>
    <ligand>
        <name>substrate</name>
    </ligand>
</feature>
<feature type="binding site" evidence="1">
    <location>
        <position position="107"/>
    </location>
    <ligand>
        <name>substrate</name>
    </ligand>
</feature>
<feature type="binding site" evidence="1">
    <location>
        <begin position="112"/>
        <end position="114"/>
    </location>
    <ligand>
        <name>substrate</name>
    </ligand>
</feature>
<feature type="binding site" evidence="1">
    <location>
        <position position="118"/>
    </location>
    <ligand>
        <name>substrate</name>
    </ligand>
</feature>
<feature type="binding site" evidence="1">
    <location>
        <begin position="187"/>
        <end position="192"/>
    </location>
    <ligand>
        <name>NADP(+)</name>
        <dbReference type="ChEBI" id="CHEBI:58349"/>
    </ligand>
</feature>
<feature type="site" description="Important for activity" evidence="1">
    <location>
        <position position="97"/>
    </location>
</feature>
<protein>
    <recommendedName>
        <fullName evidence="1">Glutamyl-tRNA reductase</fullName>
        <shortName evidence="1">GluTR</shortName>
        <ecNumber evidence="1">1.2.1.70</ecNumber>
    </recommendedName>
</protein>
<organism>
    <name type="scientific">Pseudomonas putida (strain ATCC 47054 / DSM 6125 / CFBP 8728 / NCIMB 11950 / KT2440)</name>
    <dbReference type="NCBI Taxonomy" id="160488"/>
    <lineage>
        <taxon>Bacteria</taxon>
        <taxon>Pseudomonadati</taxon>
        <taxon>Pseudomonadota</taxon>
        <taxon>Gammaproteobacteria</taxon>
        <taxon>Pseudomonadales</taxon>
        <taxon>Pseudomonadaceae</taxon>
        <taxon>Pseudomonas</taxon>
    </lineage>
</organism>
<reference key="1">
    <citation type="journal article" date="2002" name="Environ. Microbiol.">
        <title>Complete genome sequence and comparative analysis of the metabolically versatile Pseudomonas putida KT2440.</title>
        <authorList>
            <person name="Nelson K.E."/>
            <person name="Weinel C."/>
            <person name="Paulsen I.T."/>
            <person name="Dodson R.J."/>
            <person name="Hilbert H."/>
            <person name="Martins dos Santos V.A.P."/>
            <person name="Fouts D.E."/>
            <person name="Gill S.R."/>
            <person name="Pop M."/>
            <person name="Holmes M."/>
            <person name="Brinkac L.M."/>
            <person name="Beanan M.J."/>
            <person name="DeBoy R.T."/>
            <person name="Daugherty S.C."/>
            <person name="Kolonay J.F."/>
            <person name="Madupu R."/>
            <person name="Nelson W.C."/>
            <person name="White O."/>
            <person name="Peterson J.D."/>
            <person name="Khouri H.M."/>
            <person name="Hance I."/>
            <person name="Chris Lee P."/>
            <person name="Holtzapple E.K."/>
            <person name="Scanlan D."/>
            <person name="Tran K."/>
            <person name="Moazzez A."/>
            <person name="Utterback T.R."/>
            <person name="Rizzo M."/>
            <person name="Lee K."/>
            <person name="Kosack D."/>
            <person name="Moestl D."/>
            <person name="Wedler H."/>
            <person name="Lauber J."/>
            <person name="Stjepandic D."/>
            <person name="Hoheisel J."/>
            <person name="Straetz M."/>
            <person name="Heim S."/>
            <person name="Kiewitz C."/>
            <person name="Eisen J.A."/>
            <person name="Timmis K.N."/>
            <person name="Duesterhoeft A."/>
            <person name="Tuemmler B."/>
            <person name="Fraser C.M."/>
        </authorList>
    </citation>
    <scope>NUCLEOTIDE SEQUENCE [LARGE SCALE GENOMIC DNA]</scope>
    <source>
        <strain>ATCC 47054 / DSM 6125 / CFBP 8728 / NCIMB 11950 / KT2440</strain>
    </source>
</reference>
<sequence length="425" mass="46306">MAFLALGINHKTASVDVRERVAFTPEQLVDALQQLCRLTSSREAAILSTCNRSELYIEQDHLSADAVLQWLADYHRLSIDELRASAYVHEEHDAVKHMMRVASGLDSLVLGEPQILGQMKSAYAVAREAGTVGPLLGRLFQATFSAAKQVRTDTAIGENPVSVAFAAVSLAKQIFADLGRSQALLIGAGETITLVARHLHEQGVRRIVVANRTLERASILAEQFGAHAVLLADIPQELANSDIVISSTASQLPILGKGAVESALKQRRHKPIFMVDIAVPRDIETEVGELDDVYLYTVDDLHDVVAENLKSRQGAAQAAEELVSVGAEDFMLRLRELAAVDVLRAYRQQSERLRDEELQKALRLLANGGNPEDVLAQLARGLTNKLLHAPSVQLKKLSAEGRLDALAMAQELFALNEGSTDKSPQ</sequence>
<proteinExistence type="inferred from homology"/>
<evidence type="ECO:0000255" key="1">
    <source>
        <dbReference type="HAMAP-Rule" id="MF_00087"/>
    </source>
</evidence>
<dbReference type="EC" id="1.2.1.70" evidence="1"/>
<dbReference type="EMBL" id="AE015451">
    <property type="protein sequence ID" value="AAN66357.1"/>
    <property type="molecule type" value="Genomic_DNA"/>
</dbReference>
<dbReference type="RefSeq" id="NP_742893.1">
    <property type="nucleotide sequence ID" value="NC_002947.4"/>
</dbReference>
<dbReference type="RefSeq" id="WP_010951977.1">
    <property type="nucleotide sequence ID" value="NZ_CP169744.1"/>
</dbReference>
<dbReference type="SMR" id="Q88PW6"/>
<dbReference type="STRING" id="160488.PP_0732"/>
<dbReference type="PaxDb" id="160488-PP_0732"/>
<dbReference type="GeneID" id="83678085"/>
<dbReference type="KEGG" id="ppu:PP_0732"/>
<dbReference type="PATRIC" id="fig|160488.4.peg.784"/>
<dbReference type="eggNOG" id="COG0373">
    <property type="taxonomic scope" value="Bacteria"/>
</dbReference>
<dbReference type="HOGENOM" id="CLU_035113_2_2_6"/>
<dbReference type="OrthoDB" id="110209at2"/>
<dbReference type="PhylomeDB" id="Q88PW6"/>
<dbReference type="BioCyc" id="PPUT160488:G1G01-807-MONOMER"/>
<dbReference type="UniPathway" id="UPA00251">
    <property type="reaction ID" value="UER00316"/>
</dbReference>
<dbReference type="Proteomes" id="UP000000556">
    <property type="component" value="Chromosome"/>
</dbReference>
<dbReference type="GO" id="GO:0008883">
    <property type="term" value="F:glutamyl-tRNA reductase activity"/>
    <property type="evidence" value="ECO:0007669"/>
    <property type="project" value="UniProtKB-UniRule"/>
</dbReference>
<dbReference type="GO" id="GO:0050661">
    <property type="term" value="F:NADP binding"/>
    <property type="evidence" value="ECO:0007669"/>
    <property type="project" value="InterPro"/>
</dbReference>
<dbReference type="GO" id="GO:0019353">
    <property type="term" value="P:protoporphyrinogen IX biosynthetic process from glutamate"/>
    <property type="evidence" value="ECO:0007669"/>
    <property type="project" value="TreeGrafter"/>
</dbReference>
<dbReference type="CDD" id="cd05213">
    <property type="entry name" value="NAD_bind_Glutamyl_tRNA_reduct"/>
    <property type="match status" value="1"/>
</dbReference>
<dbReference type="FunFam" id="3.30.460.30:FF:000001">
    <property type="entry name" value="Glutamyl-tRNA reductase"/>
    <property type="match status" value="1"/>
</dbReference>
<dbReference type="FunFam" id="3.40.50.720:FF:000031">
    <property type="entry name" value="Glutamyl-tRNA reductase"/>
    <property type="match status" value="1"/>
</dbReference>
<dbReference type="Gene3D" id="3.30.460.30">
    <property type="entry name" value="Glutamyl-tRNA reductase, N-terminal domain"/>
    <property type="match status" value="1"/>
</dbReference>
<dbReference type="Gene3D" id="3.40.50.720">
    <property type="entry name" value="NAD(P)-binding Rossmann-like Domain"/>
    <property type="match status" value="1"/>
</dbReference>
<dbReference type="HAMAP" id="MF_00087">
    <property type="entry name" value="Glu_tRNA_reductase"/>
    <property type="match status" value="1"/>
</dbReference>
<dbReference type="InterPro" id="IPR000343">
    <property type="entry name" value="4pyrrol_synth_GluRdtase"/>
</dbReference>
<dbReference type="InterPro" id="IPR015896">
    <property type="entry name" value="4pyrrol_synth_GluRdtase_dimer"/>
</dbReference>
<dbReference type="InterPro" id="IPR015895">
    <property type="entry name" value="4pyrrol_synth_GluRdtase_N"/>
</dbReference>
<dbReference type="InterPro" id="IPR018214">
    <property type="entry name" value="GluRdtase_CS"/>
</dbReference>
<dbReference type="InterPro" id="IPR036453">
    <property type="entry name" value="GluRdtase_dimer_dom_sf"/>
</dbReference>
<dbReference type="InterPro" id="IPR036343">
    <property type="entry name" value="GluRdtase_N_sf"/>
</dbReference>
<dbReference type="InterPro" id="IPR036291">
    <property type="entry name" value="NAD(P)-bd_dom_sf"/>
</dbReference>
<dbReference type="InterPro" id="IPR006151">
    <property type="entry name" value="Shikm_DH/Glu-tRNA_Rdtase"/>
</dbReference>
<dbReference type="NCBIfam" id="TIGR01035">
    <property type="entry name" value="hemA"/>
    <property type="match status" value="1"/>
</dbReference>
<dbReference type="PANTHER" id="PTHR43013">
    <property type="entry name" value="GLUTAMYL-TRNA REDUCTASE"/>
    <property type="match status" value="1"/>
</dbReference>
<dbReference type="PANTHER" id="PTHR43013:SF1">
    <property type="entry name" value="GLUTAMYL-TRNA REDUCTASE"/>
    <property type="match status" value="1"/>
</dbReference>
<dbReference type="Pfam" id="PF00745">
    <property type="entry name" value="GlutR_dimer"/>
    <property type="match status" value="1"/>
</dbReference>
<dbReference type="Pfam" id="PF05201">
    <property type="entry name" value="GlutR_N"/>
    <property type="match status" value="1"/>
</dbReference>
<dbReference type="Pfam" id="PF01488">
    <property type="entry name" value="Shikimate_DH"/>
    <property type="match status" value="1"/>
</dbReference>
<dbReference type="PIRSF" id="PIRSF000445">
    <property type="entry name" value="4pyrrol_synth_GluRdtase"/>
    <property type="match status" value="1"/>
</dbReference>
<dbReference type="SUPFAM" id="SSF69742">
    <property type="entry name" value="Glutamyl tRNA-reductase catalytic, N-terminal domain"/>
    <property type="match status" value="1"/>
</dbReference>
<dbReference type="SUPFAM" id="SSF69075">
    <property type="entry name" value="Glutamyl tRNA-reductase dimerization domain"/>
    <property type="match status" value="1"/>
</dbReference>
<dbReference type="SUPFAM" id="SSF51735">
    <property type="entry name" value="NAD(P)-binding Rossmann-fold domains"/>
    <property type="match status" value="1"/>
</dbReference>
<dbReference type="PROSITE" id="PS00747">
    <property type="entry name" value="GLUTR"/>
    <property type="match status" value="1"/>
</dbReference>
<name>HEM1_PSEPK</name>
<gene>
    <name evidence="1" type="primary">hemA</name>
    <name type="ordered locus">PP_0732</name>
</gene>
<comment type="function">
    <text evidence="1">Catalyzes the NADPH-dependent reduction of glutamyl-tRNA(Glu) to glutamate 1-semialdehyde (GSA).</text>
</comment>
<comment type="catalytic activity">
    <reaction evidence="1">
        <text>(S)-4-amino-5-oxopentanoate + tRNA(Glu) + NADP(+) = L-glutamyl-tRNA(Glu) + NADPH + H(+)</text>
        <dbReference type="Rhea" id="RHEA:12344"/>
        <dbReference type="Rhea" id="RHEA-COMP:9663"/>
        <dbReference type="Rhea" id="RHEA-COMP:9680"/>
        <dbReference type="ChEBI" id="CHEBI:15378"/>
        <dbReference type="ChEBI" id="CHEBI:57501"/>
        <dbReference type="ChEBI" id="CHEBI:57783"/>
        <dbReference type="ChEBI" id="CHEBI:58349"/>
        <dbReference type="ChEBI" id="CHEBI:78442"/>
        <dbReference type="ChEBI" id="CHEBI:78520"/>
        <dbReference type="EC" id="1.2.1.70"/>
    </reaction>
</comment>
<comment type="pathway">
    <text evidence="1">Porphyrin-containing compound metabolism; protoporphyrin-IX biosynthesis; 5-aminolevulinate from L-glutamyl-tRNA(Glu): step 1/2.</text>
</comment>
<comment type="subunit">
    <text evidence="1">Homodimer.</text>
</comment>
<comment type="domain">
    <text evidence="1">Possesses an unusual extended V-shaped dimeric structure with each monomer consisting of three distinct domains arranged along a curved 'spinal' alpha-helix. The N-terminal catalytic domain specifically recognizes the glutamate moiety of the substrate. The second domain is the NADPH-binding domain, and the third C-terminal domain is responsible for dimerization.</text>
</comment>
<comment type="miscellaneous">
    <text evidence="1">During catalysis, the active site Cys acts as a nucleophile attacking the alpha-carbonyl group of tRNA-bound glutamate with the formation of a thioester intermediate between enzyme and glutamate, and the concomitant release of tRNA(Glu). The thioester intermediate is finally reduced by direct hydride transfer from NADPH, to form the product GSA.</text>
</comment>
<comment type="similarity">
    <text evidence="1">Belongs to the glutamyl-tRNA reductase family.</text>
</comment>
<accession>Q88PW6</accession>
<keyword id="KW-0521">NADP</keyword>
<keyword id="KW-0560">Oxidoreductase</keyword>
<keyword id="KW-0627">Porphyrin biosynthesis</keyword>
<keyword id="KW-1185">Reference proteome</keyword>